<evidence type="ECO:0000255" key="1">
    <source>
        <dbReference type="HAMAP-Rule" id="MF_00823"/>
    </source>
</evidence>
<evidence type="ECO:0000255" key="2">
    <source>
        <dbReference type="PROSITE-ProRule" id="PRU01137"/>
    </source>
</evidence>
<keyword id="KW-0067">ATP-binding</keyword>
<keyword id="KW-0963">Cytoplasm</keyword>
<keyword id="KW-0275">Fatty acid biosynthesis</keyword>
<keyword id="KW-0276">Fatty acid metabolism</keyword>
<keyword id="KW-0444">Lipid biosynthesis</keyword>
<keyword id="KW-0443">Lipid metabolism</keyword>
<keyword id="KW-0547">Nucleotide-binding</keyword>
<keyword id="KW-0808">Transferase</keyword>
<reference key="1">
    <citation type="journal article" date="2010" name="Genome Biol. Evol.">
        <title>Continuing evolution of Burkholderia mallei through genome reduction and large-scale rearrangements.</title>
        <authorList>
            <person name="Losada L."/>
            <person name="Ronning C.M."/>
            <person name="DeShazer D."/>
            <person name="Woods D."/>
            <person name="Fedorova N."/>
            <person name="Kim H.S."/>
            <person name="Shabalina S.A."/>
            <person name="Pearson T.R."/>
            <person name="Brinkac L."/>
            <person name="Tan P."/>
            <person name="Nandi T."/>
            <person name="Crabtree J."/>
            <person name="Badger J."/>
            <person name="Beckstrom-Sternberg S."/>
            <person name="Saqib M."/>
            <person name="Schutzer S.E."/>
            <person name="Keim P."/>
            <person name="Nierman W.C."/>
        </authorList>
    </citation>
    <scope>NUCLEOTIDE SEQUENCE [LARGE SCALE GENOMIC DNA]</scope>
    <source>
        <strain>1710b</strain>
    </source>
</reference>
<accession>Q3JQT8</accession>
<comment type="function">
    <text evidence="1">Component of the acetyl coenzyme A carboxylase (ACC) complex. First, biotin carboxylase catalyzes the carboxylation of biotin on its carrier protein (BCCP) and then the CO(2) group is transferred by the carboxyltransferase to acetyl-CoA to form malonyl-CoA.</text>
</comment>
<comment type="catalytic activity">
    <reaction evidence="1">
        <text>N(6)-carboxybiotinyl-L-lysyl-[protein] + acetyl-CoA = N(6)-biotinyl-L-lysyl-[protein] + malonyl-CoA</text>
        <dbReference type="Rhea" id="RHEA:54728"/>
        <dbReference type="Rhea" id="RHEA-COMP:10505"/>
        <dbReference type="Rhea" id="RHEA-COMP:10506"/>
        <dbReference type="ChEBI" id="CHEBI:57288"/>
        <dbReference type="ChEBI" id="CHEBI:57384"/>
        <dbReference type="ChEBI" id="CHEBI:83144"/>
        <dbReference type="ChEBI" id="CHEBI:83145"/>
        <dbReference type="EC" id="2.1.3.15"/>
    </reaction>
</comment>
<comment type="pathway">
    <text evidence="1">Lipid metabolism; malonyl-CoA biosynthesis; malonyl-CoA from acetyl-CoA: step 1/1.</text>
</comment>
<comment type="subunit">
    <text evidence="1">Acetyl-CoA carboxylase is a heterohexamer composed of biotin carboxyl carrier protein (AccB), biotin carboxylase (AccC) and two subunits each of ACCase subunit alpha (AccA) and ACCase subunit beta (AccD).</text>
</comment>
<comment type="subcellular location">
    <subcellularLocation>
        <location evidence="1">Cytoplasm</location>
    </subcellularLocation>
</comment>
<comment type="similarity">
    <text evidence="1">Belongs to the AccA family.</text>
</comment>
<organism>
    <name type="scientific">Burkholderia pseudomallei (strain 1710b)</name>
    <dbReference type="NCBI Taxonomy" id="320372"/>
    <lineage>
        <taxon>Bacteria</taxon>
        <taxon>Pseudomonadati</taxon>
        <taxon>Pseudomonadota</taxon>
        <taxon>Betaproteobacteria</taxon>
        <taxon>Burkholderiales</taxon>
        <taxon>Burkholderiaceae</taxon>
        <taxon>Burkholderia</taxon>
        <taxon>pseudomallei group</taxon>
    </lineage>
</organism>
<name>ACCA_BURP1</name>
<sequence>MKTTFLDFEQPIAELEAKIEELRFVQDDSAVDISEEIERLSKKSQQLTKDLYANLTPWQVSQIARHPQRPYTLDYVSELFTDFHELHGDRAFADDQSIVGGLARFNGHACMVIGHQKGRDTKERAARNFGMPRPEGYRKAERLMRVAEKFGLPIFTFVDTPGAYPGVGAEERGQSEAIGHNLYVMAELKTPIIATVIGEGGSGGALAIAVADTVMMLQFSTYSVISPEGCASILWKSAAKAPEAAEALGLTAHRLKALGLIDKIVNEPLGGAHRDPKGMAALLRRALGDSLRQFQGMSVDALRERRFERLMAYGKFKETTPRA</sequence>
<protein>
    <recommendedName>
        <fullName evidence="1">Acetyl-coenzyme A carboxylase carboxyl transferase subunit alpha</fullName>
        <shortName evidence="1">ACCase subunit alpha</shortName>
        <shortName evidence="1">Acetyl-CoA carboxylase carboxyltransferase subunit alpha</shortName>
        <ecNumber evidence="1">2.1.3.15</ecNumber>
    </recommendedName>
</protein>
<proteinExistence type="inferred from homology"/>
<dbReference type="EC" id="2.1.3.15" evidence="1"/>
<dbReference type="EMBL" id="CP000124">
    <property type="protein sequence ID" value="ABA50063.1"/>
    <property type="molecule type" value="Genomic_DNA"/>
</dbReference>
<dbReference type="RefSeq" id="WP_004193249.1">
    <property type="nucleotide sequence ID" value="NC_007434.1"/>
</dbReference>
<dbReference type="SMR" id="Q3JQT8"/>
<dbReference type="EnsemblBacteria" id="ABA50063">
    <property type="protein sequence ID" value="ABA50063"/>
    <property type="gene ID" value="BURPS1710b_2679"/>
</dbReference>
<dbReference type="KEGG" id="bpm:BURPS1710b_2679"/>
<dbReference type="HOGENOM" id="CLU_015486_0_2_4"/>
<dbReference type="UniPathway" id="UPA00655">
    <property type="reaction ID" value="UER00711"/>
</dbReference>
<dbReference type="Proteomes" id="UP000002700">
    <property type="component" value="Chromosome I"/>
</dbReference>
<dbReference type="GO" id="GO:0009317">
    <property type="term" value="C:acetyl-CoA carboxylase complex"/>
    <property type="evidence" value="ECO:0007669"/>
    <property type="project" value="InterPro"/>
</dbReference>
<dbReference type="GO" id="GO:0003989">
    <property type="term" value="F:acetyl-CoA carboxylase activity"/>
    <property type="evidence" value="ECO:0007669"/>
    <property type="project" value="InterPro"/>
</dbReference>
<dbReference type="GO" id="GO:0005524">
    <property type="term" value="F:ATP binding"/>
    <property type="evidence" value="ECO:0007669"/>
    <property type="project" value="UniProtKB-KW"/>
</dbReference>
<dbReference type="GO" id="GO:0016743">
    <property type="term" value="F:carboxyl- or carbamoyltransferase activity"/>
    <property type="evidence" value="ECO:0007669"/>
    <property type="project" value="UniProtKB-UniRule"/>
</dbReference>
<dbReference type="GO" id="GO:0006633">
    <property type="term" value="P:fatty acid biosynthetic process"/>
    <property type="evidence" value="ECO:0007669"/>
    <property type="project" value="UniProtKB-KW"/>
</dbReference>
<dbReference type="GO" id="GO:2001295">
    <property type="term" value="P:malonyl-CoA biosynthetic process"/>
    <property type="evidence" value="ECO:0007669"/>
    <property type="project" value="UniProtKB-UniRule"/>
</dbReference>
<dbReference type="Gene3D" id="3.90.226.10">
    <property type="entry name" value="2-enoyl-CoA Hydratase, Chain A, domain 1"/>
    <property type="match status" value="1"/>
</dbReference>
<dbReference type="HAMAP" id="MF_00823">
    <property type="entry name" value="AcetylCoA_CT_alpha"/>
    <property type="match status" value="1"/>
</dbReference>
<dbReference type="InterPro" id="IPR001095">
    <property type="entry name" value="Acetyl_CoA_COase_a_su"/>
</dbReference>
<dbReference type="InterPro" id="IPR029045">
    <property type="entry name" value="ClpP/crotonase-like_dom_sf"/>
</dbReference>
<dbReference type="InterPro" id="IPR011763">
    <property type="entry name" value="COA_CT_C"/>
</dbReference>
<dbReference type="NCBIfam" id="TIGR00513">
    <property type="entry name" value="accA"/>
    <property type="match status" value="1"/>
</dbReference>
<dbReference type="NCBIfam" id="NF041504">
    <property type="entry name" value="AccA_sub"/>
    <property type="match status" value="1"/>
</dbReference>
<dbReference type="NCBIfam" id="NF004344">
    <property type="entry name" value="PRK05724.1"/>
    <property type="match status" value="1"/>
</dbReference>
<dbReference type="PANTHER" id="PTHR42853">
    <property type="entry name" value="ACETYL-COENZYME A CARBOXYLASE CARBOXYL TRANSFERASE SUBUNIT ALPHA"/>
    <property type="match status" value="1"/>
</dbReference>
<dbReference type="PANTHER" id="PTHR42853:SF3">
    <property type="entry name" value="ACETYL-COENZYME A CARBOXYLASE CARBOXYL TRANSFERASE SUBUNIT ALPHA, CHLOROPLASTIC"/>
    <property type="match status" value="1"/>
</dbReference>
<dbReference type="Pfam" id="PF03255">
    <property type="entry name" value="ACCA"/>
    <property type="match status" value="1"/>
</dbReference>
<dbReference type="PRINTS" id="PR01069">
    <property type="entry name" value="ACCCTRFRASEA"/>
</dbReference>
<dbReference type="SUPFAM" id="SSF52096">
    <property type="entry name" value="ClpP/crotonase"/>
    <property type="match status" value="1"/>
</dbReference>
<dbReference type="PROSITE" id="PS50989">
    <property type="entry name" value="COA_CT_CTER"/>
    <property type="match status" value="1"/>
</dbReference>
<gene>
    <name evidence="1" type="primary">accA</name>
    <name type="ordered locus">BURPS1710b_2679</name>
</gene>
<feature type="chain" id="PRO_1000062592" description="Acetyl-coenzyme A carboxylase carboxyl transferase subunit alpha">
    <location>
        <begin position="1"/>
        <end position="323"/>
    </location>
</feature>
<feature type="domain" description="CoA carboxyltransferase C-terminal" evidence="2">
    <location>
        <begin position="39"/>
        <end position="293"/>
    </location>
</feature>